<accession>P61368</accession>
<proteinExistence type="evidence at transcript level"/>
<reference key="1">
    <citation type="submission" date="2004-03" db="EMBL/GenBank/DDBJ databases">
        <title>Molecular cloning and sequence analysis of Hydra vulgaris ribosomal protein L15 cDNA.</title>
        <authorList>
            <person name="Zhang J."/>
            <person name="Song P."/>
        </authorList>
    </citation>
    <scope>NUCLEOTIDE SEQUENCE [MRNA]</scope>
</reference>
<evidence type="ECO:0000250" key="1"/>
<evidence type="ECO:0000305" key="2"/>
<dbReference type="EMBL" id="AY563556">
    <property type="protein sequence ID" value="AAS72415.1"/>
    <property type="molecule type" value="mRNA"/>
</dbReference>
<dbReference type="SMR" id="P61368"/>
<dbReference type="OrthoDB" id="10255148at2759"/>
<dbReference type="Proteomes" id="UP000694840">
    <property type="component" value="Unplaced"/>
</dbReference>
<dbReference type="GO" id="GO:0022625">
    <property type="term" value="C:cytosolic large ribosomal subunit"/>
    <property type="evidence" value="ECO:0007669"/>
    <property type="project" value="TreeGrafter"/>
</dbReference>
<dbReference type="GO" id="GO:0003723">
    <property type="term" value="F:RNA binding"/>
    <property type="evidence" value="ECO:0007669"/>
    <property type="project" value="TreeGrafter"/>
</dbReference>
<dbReference type="GO" id="GO:0003735">
    <property type="term" value="F:structural constituent of ribosome"/>
    <property type="evidence" value="ECO:0007669"/>
    <property type="project" value="InterPro"/>
</dbReference>
<dbReference type="GO" id="GO:0002181">
    <property type="term" value="P:cytoplasmic translation"/>
    <property type="evidence" value="ECO:0007669"/>
    <property type="project" value="TreeGrafter"/>
</dbReference>
<dbReference type="FunFam" id="3.40.1120.10:FF:000001">
    <property type="entry name" value="Ribosomal protein L15"/>
    <property type="match status" value="1"/>
</dbReference>
<dbReference type="Gene3D" id="3.40.1120.10">
    <property type="entry name" value="Ribosomal protein l15e"/>
    <property type="match status" value="1"/>
</dbReference>
<dbReference type="InterPro" id="IPR024794">
    <property type="entry name" value="Rbsml_eL15_core_dom_sf"/>
</dbReference>
<dbReference type="InterPro" id="IPR000439">
    <property type="entry name" value="Ribosomal_eL15"/>
</dbReference>
<dbReference type="InterPro" id="IPR020925">
    <property type="entry name" value="Ribosomal_eL15_CS"/>
</dbReference>
<dbReference type="InterPro" id="IPR012678">
    <property type="entry name" value="Ribosomal_uL23/eL15/eS24_sf"/>
</dbReference>
<dbReference type="NCBIfam" id="NF003269">
    <property type="entry name" value="PRK04243.1"/>
    <property type="match status" value="1"/>
</dbReference>
<dbReference type="PANTHER" id="PTHR11847:SF4">
    <property type="entry name" value="LARGE RIBOSOMAL SUBUNIT PROTEIN EL15"/>
    <property type="match status" value="1"/>
</dbReference>
<dbReference type="PANTHER" id="PTHR11847">
    <property type="entry name" value="RIBOSOMAL PROTEIN L15"/>
    <property type="match status" value="1"/>
</dbReference>
<dbReference type="Pfam" id="PF00827">
    <property type="entry name" value="Ribosomal_L15e"/>
    <property type="match status" value="1"/>
</dbReference>
<dbReference type="SMART" id="SM01384">
    <property type="entry name" value="Ribosomal_L15e"/>
    <property type="match status" value="1"/>
</dbReference>
<dbReference type="SUPFAM" id="SSF54189">
    <property type="entry name" value="Ribosomal proteins S24e, L23 and L15e"/>
    <property type="match status" value="1"/>
</dbReference>
<dbReference type="PROSITE" id="PS01194">
    <property type="entry name" value="RIBOSOMAL_L15E"/>
    <property type="match status" value="1"/>
</dbReference>
<keyword id="KW-1185">Reference proteome</keyword>
<keyword id="KW-0687">Ribonucleoprotein</keyword>
<keyword id="KW-0689">Ribosomal protein</keyword>
<name>RL15_HYDVU</name>
<feature type="initiator methionine" description="Removed" evidence="1">
    <location>
        <position position="1"/>
    </location>
</feature>
<feature type="chain" id="PRO_0000127549" description="Large ribosomal subunit protein eL15">
    <location>
        <begin position="2"/>
        <end position="204"/>
    </location>
</feature>
<protein>
    <recommendedName>
        <fullName evidence="2">Large ribosomal subunit protein eL15</fullName>
    </recommendedName>
    <alternativeName>
        <fullName>60S ribosomal protein L15</fullName>
    </alternativeName>
</protein>
<comment type="similarity">
    <text evidence="2">Belongs to the eukaryotic ribosomal protein eL15 family.</text>
</comment>
<sequence>MGAYKYMQELWRKKQSDVMRFLLRVRCWQYRQLSALHRAPRPTRPDKARRLGYKAKQGYVIYRIRVRRGGRKRPVPKGATYGKPVHHGVNQIKFARSLQSVAEERAGRHCGGLRVLSSYWVGEDSTYKFFEVVLVDTFHKAIRRNPDTQWITKAVHKHREMRGLTSAGKKSRGLGKGHKFHLTIGGSRRAAWKRRNTLQLHRYR</sequence>
<gene>
    <name type="primary">RPL15</name>
</gene>
<organism>
    <name type="scientific">Hydra vulgaris</name>
    <name type="common">Hydra</name>
    <name type="synonym">Hydra attenuata</name>
    <dbReference type="NCBI Taxonomy" id="6087"/>
    <lineage>
        <taxon>Eukaryota</taxon>
        <taxon>Metazoa</taxon>
        <taxon>Cnidaria</taxon>
        <taxon>Hydrozoa</taxon>
        <taxon>Hydroidolina</taxon>
        <taxon>Anthoathecata</taxon>
        <taxon>Aplanulata</taxon>
        <taxon>Hydridae</taxon>
        <taxon>Hydra</taxon>
    </lineage>
</organism>